<protein>
    <recommendedName>
        <fullName evidence="1">dCTP deaminase, dUMP-forming</fullName>
        <ecNumber evidence="1">3.5.4.30</ecNumber>
    </recommendedName>
    <alternativeName>
        <fullName evidence="1">Bifunctional dCTP deaminase:dUTPase</fullName>
    </alternativeName>
    <alternativeName>
        <fullName evidence="1">DCD-DUT</fullName>
    </alternativeName>
</protein>
<sequence>MILSDRDIRSAIDSGHLGISPFDPTMVQPSSIDVRLDRYFRVFNNARYTHIDPKQEQEDLTSLVEVKEGDAFILHPGEFVLGSTLEEFALPADLAGRLEGKSSLGRLGLLTHSTAGFIDPGFNGYITFELSNASNLPIALYPEMKVGQLALFMMSSPAETPYGSGSLGSKYQGQRGPTASKAYMNFR</sequence>
<feature type="chain" id="PRO_1000203356" description="dCTP deaminase, dUMP-forming">
    <location>
        <begin position="1"/>
        <end position="187"/>
    </location>
</feature>
<feature type="active site" description="Proton donor/acceptor" evidence="1">
    <location>
        <position position="129"/>
    </location>
</feature>
<feature type="binding site" evidence="1">
    <location>
        <begin position="101"/>
        <end position="106"/>
    </location>
    <ligand>
        <name>dCTP</name>
        <dbReference type="ChEBI" id="CHEBI:61481"/>
    </ligand>
</feature>
<feature type="binding site" evidence="1">
    <location>
        <position position="119"/>
    </location>
    <ligand>
        <name>dCTP</name>
        <dbReference type="ChEBI" id="CHEBI:61481"/>
    </ligand>
</feature>
<feature type="binding site" evidence="1">
    <location>
        <position position="148"/>
    </location>
    <ligand>
        <name>dCTP</name>
        <dbReference type="ChEBI" id="CHEBI:61481"/>
    </ligand>
</feature>
<feature type="binding site" evidence="1">
    <location>
        <position position="162"/>
    </location>
    <ligand>
        <name>dCTP</name>
        <dbReference type="ChEBI" id="CHEBI:61481"/>
    </ligand>
</feature>
<feature type="binding site" evidence="1">
    <location>
        <position position="174"/>
    </location>
    <ligand>
        <name>dCTP</name>
        <dbReference type="ChEBI" id="CHEBI:61481"/>
    </ligand>
</feature>
<feature type="site" description="Important for bifunctional activity" evidence="1">
    <location>
        <begin position="116"/>
        <end position="117"/>
    </location>
</feature>
<comment type="function">
    <text evidence="1">Bifunctional enzyme that catalyzes both the deamination of dCTP to dUTP and the hydrolysis of dUTP to dUMP without releasing the toxic dUTP intermediate.</text>
</comment>
<comment type="catalytic activity">
    <reaction evidence="1">
        <text>dCTP + 2 H2O = dUMP + NH4(+) + diphosphate</text>
        <dbReference type="Rhea" id="RHEA:19205"/>
        <dbReference type="ChEBI" id="CHEBI:15377"/>
        <dbReference type="ChEBI" id="CHEBI:28938"/>
        <dbReference type="ChEBI" id="CHEBI:33019"/>
        <dbReference type="ChEBI" id="CHEBI:61481"/>
        <dbReference type="ChEBI" id="CHEBI:246422"/>
        <dbReference type="EC" id="3.5.4.30"/>
    </reaction>
</comment>
<comment type="pathway">
    <text evidence="1">Pyrimidine metabolism; dUMP biosynthesis; dUMP from dCTP: step 1/1.</text>
</comment>
<comment type="subunit">
    <text evidence="1">Homotrimer.</text>
</comment>
<comment type="similarity">
    <text evidence="1">Belongs to the dCTP deaminase family.</text>
</comment>
<dbReference type="EC" id="3.5.4.30" evidence="1"/>
<dbReference type="EMBL" id="CP001620">
    <property type="protein sequence ID" value="ACR17054.1"/>
    <property type="molecule type" value="Genomic_DNA"/>
</dbReference>
<dbReference type="RefSeq" id="WP_012730942.1">
    <property type="nucleotide sequence ID" value="NC_012704.1"/>
</dbReference>
<dbReference type="SMR" id="C4LGU9"/>
<dbReference type="STRING" id="645127.ckrop_0268"/>
<dbReference type="KEGG" id="ckp:ckrop_0268"/>
<dbReference type="eggNOG" id="COG0717">
    <property type="taxonomic scope" value="Bacteria"/>
</dbReference>
<dbReference type="HOGENOM" id="CLU_087476_2_1_11"/>
<dbReference type="OrthoDB" id="9780956at2"/>
<dbReference type="UniPathway" id="UPA00610">
    <property type="reaction ID" value="UER00667"/>
</dbReference>
<dbReference type="Proteomes" id="UP000001473">
    <property type="component" value="Chromosome"/>
</dbReference>
<dbReference type="GO" id="GO:0033973">
    <property type="term" value="F:dCTP deaminase (dUMP-forming) activity"/>
    <property type="evidence" value="ECO:0007669"/>
    <property type="project" value="UniProtKB-UniRule"/>
</dbReference>
<dbReference type="GO" id="GO:0008829">
    <property type="term" value="F:dCTP deaminase activity"/>
    <property type="evidence" value="ECO:0007669"/>
    <property type="project" value="InterPro"/>
</dbReference>
<dbReference type="GO" id="GO:0000166">
    <property type="term" value="F:nucleotide binding"/>
    <property type="evidence" value="ECO:0007669"/>
    <property type="project" value="UniProtKB-KW"/>
</dbReference>
<dbReference type="GO" id="GO:0006226">
    <property type="term" value="P:dUMP biosynthetic process"/>
    <property type="evidence" value="ECO:0007669"/>
    <property type="project" value="UniProtKB-UniRule"/>
</dbReference>
<dbReference type="GO" id="GO:0006229">
    <property type="term" value="P:dUTP biosynthetic process"/>
    <property type="evidence" value="ECO:0007669"/>
    <property type="project" value="InterPro"/>
</dbReference>
<dbReference type="GO" id="GO:0015949">
    <property type="term" value="P:nucleobase-containing small molecule interconversion"/>
    <property type="evidence" value="ECO:0007669"/>
    <property type="project" value="TreeGrafter"/>
</dbReference>
<dbReference type="CDD" id="cd07557">
    <property type="entry name" value="trimeric_dUTPase"/>
    <property type="match status" value="1"/>
</dbReference>
<dbReference type="FunFam" id="2.70.40.10:FF:000005">
    <property type="entry name" value="dCTP deaminase, dUMP-forming"/>
    <property type="match status" value="1"/>
</dbReference>
<dbReference type="Gene3D" id="2.70.40.10">
    <property type="match status" value="1"/>
</dbReference>
<dbReference type="HAMAP" id="MF_00146">
    <property type="entry name" value="dCTP_deaminase"/>
    <property type="match status" value="1"/>
</dbReference>
<dbReference type="InterPro" id="IPR011962">
    <property type="entry name" value="dCTP_deaminase"/>
</dbReference>
<dbReference type="InterPro" id="IPR036157">
    <property type="entry name" value="dUTPase-like_sf"/>
</dbReference>
<dbReference type="InterPro" id="IPR033704">
    <property type="entry name" value="dUTPase_trimeric"/>
</dbReference>
<dbReference type="NCBIfam" id="TIGR02274">
    <property type="entry name" value="dCTP_deam"/>
    <property type="match status" value="1"/>
</dbReference>
<dbReference type="PANTHER" id="PTHR42680">
    <property type="entry name" value="DCTP DEAMINASE"/>
    <property type="match status" value="1"/>
</dbReference>
<dbReference type="PANTHER" id="PTHR42680:SF3">
    <property type="entry name" value="DCTP DEAMINASE"/>
    <property type="match status" value="1"/>
</dbReference>
<dbReference type="Pfam" id="PF22769">
    <property type="entry name" value="DCD"/>
    <property type="match status" value="1"/>
</dbReference>
<dbReference type="SUPFAM" id="SSF51283">
    <property type="entry name" value="dUTPase-like"/>
    <property type="match status" value="1"/>
</dbReference>
<reference key="1">
    <citation type="journal article" date="2008" name="J. Biotechnol.">
        <title>Ultrafast pyrosequencing of Corynebacterium kroppenstedtii DSM44385 revealed insights into the physiology of a lipophilic corynebacterium that lacks mycolic acids.</title>
        <authorList>
            <person name="Tauch A."/>
            <person name="Schneider J."/>
            <person name="Szczepanowski R."/>
            <person name="Tilker A."/>
            <person name="Viehoever P."/>
            <person name="Gartemann K.-H."/>
            <person name="Arnold W."/>
            <person name="Blom J."/>
            <person name="Brinkrolf K."/>
            <person name="Brune I."/>
            <person name="Goetker S."/>
            <person name="Weisshaar B."/>
            <person name="Goesmann A."/>
            <person name="Droege M."/>
            <person name="Puehler A."/>
        </authorList>
    </citation>
    <scope>NUCLEOTIDE SEQUENCE [LARGE SCALE GENOMIC DNA]</scope>
    <source>
        <strain>DSM 44385 / JCM 11950 / CIP 105744 / CCUG 35717</strain>
    </source>
</reference>
<accession>C4LGU9</accession>
<name>DCDB_CORK4</name>
<evidence type="ECO:0000255" key="1">
    <source>
        <dbReference type="HAMAP-Rule" id="MF_00146"/>
    </source>
</evidence>
<proteinExistence type="inferred from homology"/>
<organism>
    <name type="scientific">Corynebacterium kroppenstedtii (strain DSM 44385 / JCM 11950 / CIP 105744 / CCUG 35717)</name>
    <dbReference type="NCBI Taxonomy" id="645127"/>
    <lineage>
        <taxon>Bacteria</taxon>
        <taxon>Bacillati</taxon>
        <taxon>Actinomycetota</taxon>
        <taxon>Actinomycetes</taxon>
        <taxon>Mycobacteriales</taxon>
        <taxon>Corynebacteriaceae</taxon>
        <taxon>Corynebacterium</taxon>
    </lineage>
</organism>
<keyword id="KW-0378">Hydrolase</keyword>
<keyword id="KW-0546">Nucleotide metabolism</keyword>
<keyword id="KW-0547">Nucleotide-binding</keyword>
<keyword id="KW-1185">Reference proteome</keyword>
<gene>
    <name evidence="1" type="primary">dcd</name>
    <name type="ordered locus">ckrop_0268</name>
</gene>